<name>YHE9_YEAST</name>
<feature type="chain" id="PRO_0000202876" description="Uncharacterized protein YHL049C">
    <location>
        <begin position="1"/>
        <end position="271"/>
    </location>
</feature>
<protein>
    <recommendedName>
        <fullName>Uncharacterized protein YHL049C</fullName>
    </recommendedName>
</protein>
<proteinExistence type="predicted"/>
<organism>
    <name type="scientific">Saccharomyces cerevisiae (strain ATCC 204508 / S288c)</name>
    <name type="common">Baker's yeast</name>
    <dbReference type="NCBI Taxonomy" id="559292"/>
    <lineage>
        <taxon>Eukaryota</taxon>
        <taxon>Fungi</taxon>
        <taxon>Dikarya</taxon>
        <taxon>Ascomycota</taxon>
        <taxon>Saccharomycotina</taxon>
        <taxon>Saccharomycetes</taxon>
        <taxon>Saccharomycetales</taxon>
        <taxon>Saccharomycetaceae</taxon>
        <taxon>Saccharomyces</taxon>
    </lineage>
</organism>
<keyword id="KW-1185">Reference proteome</keyword>
<accession>P38722</accession>
<accession>D3DKS1</accession>
<reference key="1">
    <citation type="journal article" date="1994" name="Science">
        <title>Complete nucleotide sequence of Saccharomyces cerevisiae chromosome VIII.</title>
        <authorList>
            <person name="Johnston M."/>
            <person name="Andrews S."/>
            <person name="Brinkman R."/>
            <person name="Cooper J."/>
            <person name="Ding H."/>
            <person name="Dover J."/>
            <person name="Du Z."/>
            <person name="Favello A."/>
            <person name="Fulton L."/>
            <person name="Gattung S."/>
            <person name="Geisel C."/>
            <person name="Kirsten J."/>
            <person name="Kucaba T."/>
            <person name="Hillier L.W."/>
            <person name="Jier M."/>
            <person name="Johnston L."/>
            <person name="Langston Y."/>
            <person name="Latreille P."/>
            <person name="Louis E.J."/>
            <person name="Macri C."/>
            <person name="Mardis E."/>
            <person name="Menezes S."/>
            <person name="Mouser L."/>
            <person name="Nhan M."/>
            <person name="Rifkin L."/>
            <person name="Riles L."/>
            <person name="St Peter H."/>
            <person name="Trevaskis E."/>
            <person name="Vaughan K."/>
            <person name="Vignati D."/>
            <person name="Wilcox L."/>
            <person name="Wohldman P."/>
            <person name="Waterston R."/>
            <person name="Wilson R."/>
            <person name="Vaudin M."/>
        </authorList>
    </citation>
    <scope>NUCLEOTIDE SEQUENCE [LARGE SCALE GENOMIC DNA]</scope>
    <source>
        <strain>ATCC 204508 / S288c</strain>
    </source>
</reference>
<reference key="2">
    <citation type="journal article" date="2014" name="G3 (Bethesda)">
        <title>The reference genome sequence of Saccharomyces cerevisiae: Then and now.</title>
        <authorList>
            <person name="Engel S.R."/>
            <person name="Dietrich F.S."/>
            <person name="Fisk D.G."/>
            <person name="Binkley G."/>
            <person name="Balakrishnan R."/>
            <person name="Costanzo M.C."/>
            <person name="Dwight S.S."/>
            <person name="Hitz B.C."/>
            <person name="Karra K."/>
            <person name="Nash R.S."/>
            <person name="Weng S."/>
            <person name="Wong E.D."/>
            <person name="Lloyd P."/>
            <person name="Skrzypek M.S."/>
            <person name="Miyasato S.R."/>
            <person name="Simison M."/>
            <person name="Cherry J.M."/>
        </authorList>
    </citation>
    <scope>GENOME REANNOTATION</scope>
    <source>
        <strain>ATCC 204508 / S288c</strain>
    </source>
</reference>
<dbReference type="EMBL" id="U11583">
    <property type="protein sequence ID" value="AAB65061.1"/>
    <property type="molecule type" value="Genomic_DNA"/>
</dbReference>
<dbReference type="EMBL" id="BK006934">
    <property type="protein sequence ID" value="DAA06638.1"/>
    <property type="molecule type" value="Genomic_DNA"/>
</dbReference>
<dbReference type="RefSeq" id="NP_011814.1">
    <property type="nucleotide sequence ID" value="NM_001179129.1"/>
</dbReference>
<dbReference type="BioGRID" id="36376">
    <property type="interactions" value="4"/>
</dbReference>
<dbReference type="DIP" id="DIP-4224N"/>
<dbReference type="FunCoup" id="P38722">
    <property type="interactions" value="39"/>
</dbReference>
<dbReference type="IntAct" id="P38722">
    <property type="interactions" value="1"/>
</dbReference>
<dbReference type="STRING" id="4932.YHL049C"/>
<dbReference type="PaxDb" id="4932-YHL049C"/>
<dbReference type="PeptideAtlas" id="P38722"/>
<dbReference type="EnsemblFungi" id="YHL049C_mRNA">
    <property type="protein sequence ID" value="YHL049C"/>
    <property type="gene ID" value="YHL049C"/>
</dbReference>
<dbReference type="GeneID" id="856336"/>
<dbReference type="KEGG" id="sce:YHL049C"/>
<dbReference type="AGR" id="SGD:S000001041"/>
<dbReference type="SGD" id="S000001041">
    <property type="gene designation" value="YHL049C"/>
</dbReference>
<dbReference type="VEuPathDB" id="FungiDB:YHL049C"/>
<dbReference type="GeneTree" id="ENSGT00940000153173"/>
<dbReference type="HOGENOM" id="CLU_092906_0_0_1"/>
<dbReference type="InParanoid" id="P38722"/>
<dbReference type="BioCyc" id="YEAST:G3O-31065-MONOMER"/>
<dbReference type="PRO" id="PR:P38722"/>
<dbReference type="Proteomes" id="UP000002311">
    <property type="component" value="Chromosome VIII"/>
</dbReference>
<dbReference type="RNAct" id="P38722">
    <property type="molecule type" value="protein"/>
</dbReference>
<dbReference type="InterPro" id="IPR021646">
    <property type="entry name" value="Sir1_ORC-binding"/>
</dbReference>
<dbReference type="InterPro" id="IPR050978">
    <property type="entry name" value="Y'_ATP-dependent_helicase"/>
</dbReference>
<dbReference type="PANTHER" id="PTHR31583">
    <property type="match status" value="1"/>
</dbReference>
<dbReference type="PANTHER" id="PTHR31583:SF2">
    <property type="match status" value="1"/>
</dbReference>
<dbReference type="Pfam" id="PF11603">
    <property type="entry name" value="Sir1"/>
    <property type="match status" value="1"/>
</dbReference>
<gene>
    <name type="ordered locus">YHL049C</name>
</gene>
<sequence length="271" mass="31505">MKVSDRRKFEKANFDEFESALNNKNDLVHCPSITLFESIPTEVRSFYEDEKSGLIKVVKFRTGAMDRKRSFEKIVVSVMVGKNVQKFLTFVEDEPDFQGGPIPSKYLIPKKINLMVYTLFQVHTLKFNRKDYDTLSLFYLNRGYYNELSFRVLERCHEIASARPNDSSTMRTFTDFVSGAPIVRSLQKSTIRKYGYNLAPHMFLLLHVDELSIFSAYQASLPGEKKVDTERLKRDLCPRKPTEIKYFSQICNDMMNKKDRLGDVLHVCCPS</sequence>